<keyword id="KW-0002">3D-structure</keyword>
<keyword id="KW-0238">DNA-binding</keyword>
<keyword id="KW-0479">Metal-binding</keyword>
<keyword id="KW-0539">Nucleus</keyword>
<keyword id="KW-1267">Proteomics identification</keyword>
<keyword id="KW-1185">Reference proteome</keyword>
<keyword id="KW-0677">Repeat</keyword>
<keyword id="KW-0678">Repressor</keyword>
<keyword id="KW-0804">Transcription</keyword>
<keyword id="KW-0805">Transcription regulation</keyword>
<keyword id="KW-0862">Zinc</keyword>
<keyword id="KW-0863">Zinc-finger</keyword>
<evidence type="ECO:0000250" key="1"/>
<evidence type="ECO:0000255" key="2">
    <source>
        <dbReference type="PROSITE-ProRule" id="PRU00037"/>
    </source>
</evidence>
<evidence type="ECO:0000255" key="3">
    <source>
        <dbReference type="PROSITE-ProRule" id="PRU00042"/>
    </source>
</evidence>
<evidence type="ECO:0000256" key="4">
    <source>
        <dbReference type="SAM" id="MobiDB-lite"/>
    </source>
</evidence>
<evidence type="ECO:0000269" key="5">
    <source>
    </source>
</evidence>
<evidence type="ECO:0000269" key="6">
    <source>
    </source>
</evidence>
<evidence type="ECO:0000305" key="7"/>
<evidence type="ECO:0007829" key="8">
    <source>
        <dbReference type="PDB" id="3M5B"/>
    </source>
</evidence>
<gene>
    <name type="primary">ZBTB32</name>
    <name type="synonym">FAZF</name>
    <name type="synonym">TZFP</name>
    <name type="synonym">ZNF538</name>
</gene>
<proteinExistence type="evidence at protein level"/>
<comment type="function">
    <text evidence="1 6">DNA-binding protein that binds to the to a 5'-TGTACAGTGT-3' core sequence. May function as a transcriptional transactivator and transcriptional repressor. Probably exerts its repressor effect by preventing GATA3 from binding to DNA. May play a role in regulating the differentiation and activation of helper T-cells (By similarity).</text>
</comment>
<comment type="subunit">
    <text evidence="1">Homodimer (via PTB domain). Interacts with the N-terminal of FANCC. Interacts with ZBTB16. Interacts with GATA3 (By similarity).</text>
</comment>
<comment type="interaction">
    <interactant intactId="EBI-954098">
        <id>Q9Y2Y4</id>
    </interactant>
    <interactant intactId="EBI-372094">
        <id>Q9BQY4</id>
        <label>RHOXF2</label>
    </interactant>
    <organismsDiffer>false</organismsDiffer>
    <experiments>3</experiments>
</comment>
<comment type="interaction">
    <interactant intactId="EBI-954098">
        <id>Q9Y2Y4</id>
    </interactant>
    <interactant intactId="EBI-3957603">
        <id>P09022</id>
        <label>Hoxa1</label>
    </interactant>
    <organismsDiffer>true</organismsDiffer>
    <experiments>3</experiments>
</comment>
<comment type="subcellular location">
    <subcellularLocation>
        <location evidence="6">Nucleus</location>
    </subcellularLocation>
    <text>Located in nuclear speckles.</text>
</comment>
<comment type="tissue specificity">
    <text evidence="5">Predominantly expressed in testis. Some isoforms are ubiquitously expressed.</text>
</comment>
<comment type="domain">
    <text evidence="1">The C-terminal zinc finger domain functions as a transcriptional transactivator.</text>
</comment>
<comment type="domain">
    <text evidence="1">The BTB (POZ) domain possesses repressor activity.</text>
</comment>
<comment type="similarity">
    <text evidence="7">Belongs to the krueppel C2H2-type zinc-finger protein family.</text>
</comment>
<reference key="1">
    <citation type="journal article" date="1999" name="Biochem. Biophys. Res. Commun.">
        <title>Identification and gene structure of a novel human PLZF-related transcription factor gene, TZFP.</title>
        <authorList>
            <person name="Lin W.-C."/>
            <person name="Lai C.-H."/>
            <person name="Tang C.J."/>
            <person name="Huang C.-J."/>
            <person name="Tang T.K."/>
        </authorList>
    </citation>
    <scope>NUCLEOTIDE SEQUENCE [MRNA]</scope>
    <scope>ALTERNATIVE SPLICING</scope>
    <scope>TISSUE SPECIFICITY</scope>
    <source>
        <tissue>Testis</tissue>
    </source>
</reference>
<reference key="2">
    <citation type="journal article" date="1999" name="Blood">
        <title>A novel BTB/POZ transcriptional repressor protein interacts with the Fanconi anemia group C protein and PLZF.</title>
        <authorList>
            <person name="Hoatlin M.E."/>
            <person name="Zhi Y."/>
            <person name="Ball H."/>
            <person name="Silvey K."/>
            <person name="Melnick A."/>
            <person name="Stone S."/>
            <person name="Arai S."/>
            <person name="Hawe N."/>
            <person name="Owen G."/>
            <person name="Zelent A."/>
            <person name="Licht J.D."/>
        </authorList>
    </citation>
    <scope>NUCLEOTIDE SEQUENCE [MRNA]</scope>
    <scope>FUNCTION</scope>
    <scope>SUBCELLULAR LOCATION</scope>
    <scope>ALTERNATIVE SPLICING</scope>
    <scope>INTERACTION WITH ZBTB16 AND FANCC</scope>
    <source>
        <tissue>B-cell</tissue>
    </source>
</reference>
<reference key="3">
    <citation type="journal article" date="2004" name="Genome Res.">
        <title>The status, quality, and expansion of the NIH full-length cDNA project: the Mammalian Gene Collection (MGC).</title>
        <authorList>
            <consortium name="The MGC Project Team"/>
        </authorList>
    </citation>
    <scope>NUCLEOTIDE SEQUENCE [LARGE SCALE MRNA] OF 1-294</scope>
    <source>
        <tissue>Lymph</tissue>
    </source>
</reference>
<reference key="4">
    <citation type="journal article" date="2010" name="J. Mol. Biol.">
        <title>Insights into strand exchange in BTB domain dimers from the crystal structures of FAZF and Miz1.</title>
        <authorList>
            <person name="Stogios P.J."/>
            <person name="Cuesta-Seijo J.A."/>
            <person name="Chen L."/>
            <person name="Pomroy N.C."/>
            <person name="Prive G.G."/>
        </authorList>
    </citation>
    <scope>X-RAY CRYSTALLOGRAPHY (2.0 ANGSTROMS) OF 1-117</scope>
    <scope>SUBUNIT</scope>
</reference>
<feature type="chain" id="PRO_0000273417" description="Zinc finger and BTB domain-containing protein 32">
    <location>
        <begin position="1"/>
        <end position="487"/>
    </location>
</feature>
<feature type="domain" description="BTB" evidence="2">
    <location>
        <begin position="29"/>
        <end position="87"/>
    </location>
</feature>
<feature type="zinc finger region" description="C2H2-type 1" evidence="3">
    <location>
        <begin position="373"/>
        <end position="395"/>
    </location>
</feature>
<feature type="zinc finger region" description="C2H2-type 2" evidence="3">
    <location>
        <begin position="401"/>
        <end position="423"/>
    </location>
</feature>
<feature type="zinc finger region" description="C2H2-type 3" evidence="3">
    <location>
        <begin position="428"/>
        <end position="450"/>
    </location>
</feature>
<feature type="region of interest" description="Disordered" evidence="4">
    <location>
        <begin position="112"/>
        <end position="244"/>
    </location>
</feature>
<feature type="region of interest" description="Disordered" evidence="4">
    <location>
        <begin position="308"/>
        <end position="371"/>
    </location>
</feature>
<feature type="region of interest" description="Disordered" evidence="4">
    <location>
        <begin position="468"/>
        <end position="487"/>
    </location>
</feature>
<feature type="compositionally biased region" description="Basic and acidic residues" evidence="4">
    <location>
        <begin position="112"/>
        <end position="166"/>
    </location>
</feature>
<feature type="compositionally biased region" description="Polar residues" evidence="4">
    <location>
        <begin position="308"/>
        <end position="320"/>
    </location>
</feature>
<feature type="compositionally biased region" description="Pro residues" evidence="4">
    <location>
        <begin position="357"/>
        <end position="369"/>
    </location>
</feature>
<feature type="sequence variant" id="VAR_030145" description="In dbSNP:rs2227278.">
    <original>R</original>
    <variation>S</variation>
    <location>
        <position position="174"/>
    </location>
</feature>
<feature type="strand" evidence="8">
    <location>
        <begin position="6"/>
        <end position="8"/>
    </location>
</feature>
<feature type="turn" evidence="8">
    <location>
        <begin position="11"/>
        <end position="14"/>
    </location>
</feature>
<feature type="helix" evidence="8">
    <location>
        <begin position="16"/>
        <end position="24"/>
    </location>
</feature>
<feature type="turn" evidence="8">
    <location>
        <begin position="25"/>
        <end position="28"/>
    </location>
</feature>
<feature type="strand" evidence="8">
    <location>
        <begin position="31"/>
        <end position="35"/>
    </location>
</feature>
<feature type="strand" evidence="8">
    <location>
        <begin position="38"/>
        <end position="42"/>
    </location>
</feature>
<feature type="helix" evidence="8">
    <location>
        <begin position="44"/>
        <end position="48"/>
    </location>
</feature>
<feature type="helix" evidence="8">
    <location>
        <begin position="52"/>
        <end position="54"/>
    </location>
</feature>
<feature type="strand" evidence="8">
    <location>
        <begin position="58"/>
        <end position="61"/>
    </location>
</feature>
<feature type="helix" evidence="8">
    <location>
        <begin position="68"/>
        <end position="78"/>
    </location>
</feature>
<feature type="strand" evidence="8">
    <location>
        <begin position="83"/>
        <end position="85"/>
    </location>
</feature>
<feature type="helix" evidence="8">
    <location>
        <begin position="87"/>
        <end position="89"/>
    </location>
</feature>
<feature type="helix" evidence="8">
    <location>
        <begin position="90"/>
        <end position="99"/>
    </location>
</feature>
<feature type="helix" evidence="8">
    <location>
        <begin position="103"/>
        <end position="112"/>
    </location>
</feature>
<accession>Q9Y2Y4</accession>
<accession>Q8WVP2</accession>
<protein>
    <recommendedName>
        <fullName>Zinc finger and BTB domain-containing protein 32</fullName>
    </recommendedName>
    <alternativeName>
        <fullName>FANCC-interacting protein</fullName>
    </alternativeName>
    <alternativeName>
        <fullName>Fanconi anemia zinc finger protein</fullName>
    </alternativeName>
    <alternativeName>
        <fullName>Testis zinc finger protein</fullName>
    </alternativeName>
    <alternativeName>
        <fullName>Zinc finger protein 538</fullName>
    </alternativeName>
</protein>
<organism>
    <name type="scientific">Homo sapiens</name>
    <name type="common">Human</name>
    <dbReference type="NCBI Taxonomy" id="9606"/>
    <lineage>
        <taxon>Eukaryota</taxon>
        <taxon>Metazoa</taxon>
        <taxon>Chordata</taxon>
        <taxon>Craniata</taxon>
        <taxon>Vertebrata</taxon>
        <taxon>Euteleostomi</taxon>
        <taxon>Mammalia</taxon>
        <taxon>Eutheria</taxon>
        <taxon>Euarchontoglires</taxon>
        <taxon>Primates</taxon>
        <taxon>Haplorrhini</taxon>
        <taxon>Catarrhini</taxon>
        <taxon>Hominidae</taxon>
        <taxon>Homo</taxon>
    </lineage>
</organism>
<name>ZBT32_HUMAN</name>
<sequence length="487" mass="52963">MSLPPIRLPSPYGSDRLVQLAARLRPALCDTLITVGSQEFPAHSLVLAGVSQQLGRRGQWALGEGISPSTFAQLLNFVYGESVELQPGELRPLQEAARALGVQSLEEACWRARGDRAKKPDPGLKKHQEEPEKPSRNPERELGDPGEKQKPEQVSRTGGREQEMLHKHSPPRGRPEMAGATQEAQQEQTRSKEKRLQAPVGQRGADGKHGVLTWLRENPGGSEESLRKLPGPLPPAGSLQTSVTPRPSWAEAPWLVGGQPALWSILLMPPRYGIPFYHSTPTTGAWQEVWREQRIPLSLNAPKGLWSQNQLASSSPTPGSLPQGPAQLSPGEMEESDQGHTGALATCAGHEDKAGCPPRPHPPPAPPARSRPYACSVCGKRFSLKHQMETHYRVHTGEKPFSCSLCPQRSRDFSAMTKHLRTHGAAPYRCSLCGAGCPSLASMQAHMRGHSPSQLPPGWTIRSTFLYSSSRPSRPSTSPCCPSSSTT</sequence>
<dbReference type="EMBL" id="AF130255">
    <property type="protein sequence ID" value="AAD27708.1"/>
    <property type="molecule type" value="mRNA"/>
</dbReference>
<dbReference type="EMBL" id="AF165097">
    <property type="protein sequence ID" value="AAD48448.1"/>
    <property type="molecule type" value="mRNA"/>
</dbReference>
<dbReference type="EMBL" id="BC017700">
    <property type="protein sequence ID" value="AAH17700.1"/>
    <property type="status" value="ALT_TERM"/>
    <property type="molecule type" value="mRNA"/>
</dbReference>
<dbReference type="CCDS" id="CCDS12471.1"/>
<dbReference type="PIR" id="JC7126">
    <property type="entry name" value="JC7126"/>
</dbReference>
<dbReference type="RefSeq" id="NP_001303831.1">
    <property type="nucleotide sequence ID" value="NM_001316902.1"/>
</dbReference>
<dbReference type="RefSeq" id="NP_001303832.1">
    <property type="nucleotide sequence ID" value="NM_001316903.1"/>
</dbReference>
<dbReference type="RefSeq" id="NP_055198.1">
    <property type="nucleotide sequence ID" value="NM_014383.3"/>
</dbReference>
<dbReference type="RefSeq" id="XP_011525020.1">
    <property type="nucleotide sequence ID" value="XM_011526718.2"/>
</dbReference>
<dbReference type="RefSeq" id="XP_016882078.1">
    <property type="nucleotide sequence ID" value="XM_017026589.1"/>
</dbReference>
<dbReference type="RefSeq" id="XP_054176507.1">
    <property type="nucleotide sequence ID" value="XM_054320532.1"/>
</dbReference>
<dbReference type="PDB" id="3M5B">
    <property type="method" value="X-ray"/>
    <property type="resolution" value="2.00 A"/>
    <property type="chains" value="A/B=1-117"/>
</dbReference>
<dbReference type="PDBsum" id="3M5B"/>
<dbReference type="BMRB" id="Q9Y2Y4"/>
<dbReference type="SMR" id="Q9Y2Y4"/>
<dbReference type="BioGRID" id="117964">
    <property type="interactions" value="66"/>
</dbReference>
<dbReference type="FunCoup" id="Q9Y2Y4">
    <property type="interactions" value="644"/>
</dbReference>
<dbReference type="IntAct" id="Q9Y2Y4">
    <property type="interactions" value="9"/>
</dbReference>
<dbReference type="MINT" id="Q9Y2Y4"/>
<dbReference type="STRING" id="9606.ENSP00000376035"/>
<dbReference type="ChEMBL" id="CHEMBL5291542"/>
<dbReference type="GlyGen" id="Q9Y2Y4">
    <property type="glycosylation" value="3 sites, 1 O-linked glycan (2 sites)"/>
</dbReference>
<dbReference type="iPTMnet" id="Q9Y2Y4"/>
<dbReference type="PhosphoSitePlus" id="Q9Y2Y4"/>
<dbReference type="BioMuta" id="ZBTB32"/>
<dbReference type="DMDM" id="74762048"/>
<dbReference type="MassIVE" id="Q9Y2Y4"/>
<dbReference type="PaxDb" id="9606-ENSP00000376035"/>
<dbReference type="PeptideAtlas" id="Q9Y2Y4"/>
<dbReference type="ProteomicsDB" id="85936"/>
<dbReference type="Antibodypedia" id="35117">
    <property type="antibodies" value="176 antibodies from 24 providers"/>
</dbReference>
<dbReference type="DNASU" id="27033"/>
<dbReference type="Ensembl" id="ENST00000262630.7">
    <property type="protein sequence ID" value="ENSP00000262630.3"/>
    <property type="gene ID" value="ENSG00000011590.14"/>
</dbReference>
<dbReference type="Ensembl" id="ENST00000392197.7">
    <property type="protein sequence ID" value="ENSP00000376035.1"/>
    <property type="gene ID" value="ENSG00000011590.14"/>
</dbReference>
<dbReference type="GeneID" id="27033"/>
<dbReference type="KEGG" id="hsa:27033"/>
<dbReference type="MANE-Select" id="ENST00000392197.7">
    <property type="protein sequence ID" value="ENSP00000376035.1"/>
    <property type="RefSeq nucleotide sequence ID" value="NM_014383.3"/>
    <property type="RefSeq protein sequence ID" value="NP_055198.1"/>
</dbReference>
<dbReference type="UCSC" id="uc002oay.3">
    <property type="organism name" value="human"/>
</dbReference>
<dbReference type="AGR" id="HGNC:16763"/>
<dbReference type="CTD" id="27033"/>
<dbReference type="DisGeNET" id="27033"/>
<dbReference type="GeneCards" id="ZBTB32"/>
<dbReference type="HGNC" id="HGNC:16763">
    <property type="gene designation" value="ZBTB32"/>
</dbReference>
<dbReference type="HPA" id="ENSG00000011590">
    <property type="expression patterns" value="Tissue enriched (testis)"/>
</dbReference>
<dbReference type="MIM" id="605859">
    <property type="type" value="gene"/>
</dbReference>
<dbReference type="neXtProt" id="NX_Q9Y2Y4"/>
<dbReference type="OpenTargets" id="ENSG00000011590"/>
<dbReference type="PharmGKB" id="PA142670541"/>
<dbReference type="VEuPathDB" id="HostDB:ENSG00000011590"/>
<dbReference type="eggNOG" id="KOG1721">
    <property type="taxonomic scope" value="Eukaryota"/>
</dbReference>
<dbReference type="GeneTree" id="ENSGT00940000162716"/>
<dbReference type="HOGENOM" id="CLU_600733_0_0_1"/>
<dbReference type="InParanoid" id="Q9Y2Y4"/>
<dbReference type="OMA" id="VWRDQRI"/>
<dbReference type="OrthoDB" id="8922241at2759"/>
<dbReference type="PAN-GO" id="Q9Y2Y4">
    <property type="GO annotations" value="4 GO annotations based on evolutionary models"/>
</dbReference>
<dbReference type="PhylomeDB" id="Q9Y2Y4"/>
<dbReference type="TreeFam" id="TF350825"/>
<dbReference type="PathwayCommons" id="Q9Y2Y4"/>
<dbReference type="SignaLink" id="Q9Y2Y4"/>
<dbReference type="SIGNOR" id="Q9Y2Y4"/>
<dbReference type="BioGRID-ORCS" id="27033">
    <property type="hits" value="14 hits in 1212 CRISPR screens"/>
</dbReference>
<dbReference type="ChiTaRS" id="ZBTB32">
    <property type="organism name" value="human"/>
</dbReference>
<dbReference type="EvolutionaryTrace" id="Q9Y2Y4"/>
<dbReference type="GeneWiki" id="ZBTB32"/>
<dbReference type="GenomeRNAi" id="27033"/>
<dbReference type="Pharos" id="Q9Y2Y4">
    <property type="development level" value="Tbio"/>
</dbReference>
<dbReference type="PRO" id="PR:Q9Y2Y4"/>
<dbReference type="Proteomes" id="UP000005640">
    <property type="component" value="Chromosome 19"/>
</dbReference>
<dbReference type="RNAct" id="Q9Y2Y4">
    <property type="molecule type" value="protein"/>
</dbReference>
<dbReference type="Bgee" id="ENSG00000011590">
    <property type="expression patterns" value="Expressed in male germ line stem cell (sensu Vertebrata) in testis and 97 other cell types or tissues"/>
</dbReference>
<dbReference type="ExpressionAtlas" id="Q9Y2Y4">
    <property type="expression patterns" value="baseline and differential"/>
</dbReference>
<dbReference type="GO" id="GO:0000785">
    <property type="term" value="C:chromatin"/>
    <property type="evidence" value="ECO:0000247"/>
    <property type="project" value="NTNU_SB"/>
</dbReference>
<dbReference type="GO" id="GO:0005654">
    <property type="term" value="C:nucleoplasm"/>
    <property type="evidence" value="ECO:0000318"/>
    <property type="project" value="GO_Central"/>
</dbReference>
<dbReference type="GO" id="GO:0005634">
    <property type="term" value="C:nucleus"/>
    <property type="evidence" value="ECO:0000314"/>
    <property type="project" value="GO_Central"/>
</dbReference>
<dbReference type="GO" id="GO:0003677">
    <property type="term" value="F:DNA binding"/>
    <property type="evidence" value="ECO:0000250"/>
    <property type="project" value="UniProtKB"/>
</dbReference>
<dbReference type="GO" id="GO:0000981">
    <property type="term" value="F:DNA-binding transcription factor activity, RNA polymerase II-specific"/>
    <property type="evidence" value="ECO:0000247"/>
    <property type="project" value="NTNU_SB"/>
</dbReference>
<dbReference type="GO" id="GO:0001227">
    <property type="term" value="F:DNA-binding transcription repressor activity, RNA polymerase II-specific"/>
    <property type="evidence" value="ECO:0000314"/>
    <property type="project" value="GO_Central"/>
</dbReference>
<dbReference type="GO" id="GO:0000978">
    <property type="term" value="F:RNA polymerase II cis-regulatory region sequence-specific DNA binding"/>
    <property type="evidence" value="ECO:0000318"/>
    <property type="project" value="GO_Central"/>
</dbReference>
<dbReference type="GO" id="GO:1990837">
    <property type="term" value="F:sequence-specific double-stranded DNA binding"/>
    <property type="evidence" value="ECO:0000314"/>
    <property type="project" value="ARUK-UCL"/>
</dbReference>
<dbReference type="GO" id="GO:0008270">
    <property type="term" value="F:zinc ion binding"/>
    <property type="evidence" value="ECO:0000250"/>
    <property type="project" value="UniProtKB"/>
</dbReference>
<dbReference type="GO" id="GO:0000122">
    <property type="term" value="P:negative regulation of transcription by RNA polymerase II"/>
    <property type="evidence" value="ECO:0000314"/>
    <property type="project" value="GO_Central"/>
</dbReference>
<dbReference type="GO" id="GO:0001817">
    <property type="term" value="P:regulation of cytokine production"/>
    <property type="evidence" value="ECO:0000318"/>
    <property type="project" value="GO_Central"/>
</dbReference>
<dbReference type="GO" id="GO:0002682">
    <property type="term" value="P:regulation of immune system process"/>
    <property type="evidence" value="ECO:0000318"/>
    <property type="project" value="GO_Central"/>
</dbReference>
<dbReference type="CDD" id="cd18218">
    <property type="entry name" value="BTB_POZ_ZBTB32_FAZF_TZFP"/>
    <property type="match status" value="1"/>
</dbReference>
<dbReference type="FunFam" id="3.30.160.60:FF:000553">
    <property type="entry name" value="Zinc finger and BTB domain-containing protein 16"/>
    <property type="match status" value="1"/>
</dbReference>
<dbReference type="FunFam" id="3.30.710.10:FF:000140">
    <property type="entry name" value="Zinc finger and BTB domain-containing protein 32"/>
    <property type="match status" value="1"/>
</dbReference>
<dbReference type="FunFam" id="3.30.160.60:FF:001279">
    <property type="entry name" value="zinc finger and BTB domain-containing protein 32"/>
    <property type="match status" value="1"/>
</dbReference>
<dbReference type="Gene3D" id="3.30.160.60">
    <property type="entry name" value="Classic Zinc Finger"/>
    <property type="match status" value="2"/>
</dbReference>
<dbReference type="Gene3D" id="3.30.710.10">
    <property type="entry name" value="Potassium Channel Kv1.1, Chain A"/>
    <property type="match status" value="1"/>
</dbReference>
<dbReference type="InterPro" id="IPR000210">
    <property type="entry name" value="BTB/POZ_dom"/>
</dbReference>
<dbReference type="InterPro" id="IPR011333">
    <property type="entry name" value="SKP1/BTB/POZ_sf"/>
</dbReference>
<dbReference type="InterPro" id="IPR036236">
    <property type="entry name" value="Znf_C2H2_sf"/>
</dbReference>
<dbReference type="InterPro" id="IPR013087">
    <property type="entry name" value="Znf_C2H2_type"/>
</dbReference>
<dbReference type="PANTHER" id="PTHR24399">
    <property type="entry name" value="ZINC FINGER AND BTB DOMAIN-CONTAINING"/>
    <property type="match status" value="1"/>
</dbReference>
<dbReference type="PANTHER" id="PTHR24399:SF40">
    <property type="entry name" value="ZINC FINGER AND BTB DOMAIN-CONTAINING PROTEIN 32"/>
    <property type="match status" value="1"/>
</dbReference>
<dbReference type="Pfam" id="PF00651">
    <property type="entry name" value="BTB"/>
    <property type="match status" value="1"/>
</dbReference>
<dbReference type="Pfam" id="PF00096">
    <property type="entry name" value="zf-C2H2"/>
    <property type="match status" value="1"/>
</dbReference>
<dbReference type="Pfam" id="PF12874">
    <property type="entry name" value="zf-met"/>
    <property type="match status" value="1"/>
</dbReference>
<dbReference type="SMART" id="SM00225">
    <property type="entry name" value="BTB"/>
    <property type="match status" value="1"/>
</dbReference>
<dbReference type="SMART" id="SM00355">
    <property type="entry name" value="ZnF_C2H2"/>
    <property type="match status" value="3"/>
</dbReference>
<dbReference type="SUPFAM" id="SSF57667">
    <property type="entry name" value="beta-beta-alpha zinc fingers"/>
    <property type="match status" value="2"/>
</dbReference>
<dbReference type="SUPFAM" id="SSF54695">
    <property type="entry name" value="POZ domain"/>
    <property type="match status" value="1"/>
</dbReference>
<dbReference type="PROSITE" id="PS50097">
    <property type="entry name" value="BTB"/>
    <property type="match status" value="1"/>
</dbReference>
<dbReference type="PROSITE" id="PS00028">
    <property type="entry name" value="ZINC_FINGER_C2H2_1"/>
    <property type="match status" value="2"/>
</dbReference>
<dbReference type="PROSITE" id="PS50157">
    <property type="entry name" value="ZINC_FINGER_C2H2_2"/>
    <property type="match status" value="2"/>
</dbReference>